<feature type="chain" id="PRO_1000119932" description="Exodeoxyribonuclease 7 small subunit">
    <location>
        <begin position="1"/>
        <end position="83"/>
    </location>
</feature>
<feature type="region of interest" description="Disordered" evidence="2">
    <location>
        <begin position="1"/>
        <end position="25"/>
    </location>
</feature>
<keyword id="KW-0963">Cytoplasm</keyword>
<keyword id="KW-0269">Exonuclease</keyword>
<keyword id="KW-0378">Hydrolase</keyword>
<keyword id="KW-0540">Nuclease</keyword>
<reference key="1">
    <citation type="submission" date="2008-10" db="EMBL/GenBank/DDBJ databases">
        <title>The complete genome sequence of Helicobacter pylori strain P12.</title>
        <authorList>
            <person name="Fischer W."/>
            <person name="Windhager L."/>
            <person name="Karnholz A."/>
            <person name="Zeiller M."/>
            <person name="Zimmer R."/>
            <person name="Haas R."/>
        </authorList>
    </citation>
    <scope>NUCLEOTIDE SEQUENCE [LARGE SCALE GENOMIC DNA]</scope>
    <source>
        <strain>P12</strain>
    </source>
</reference>
<gene>
    <name evidence="1" type="primary">xseB</name>
    <name type="ordered locus">HPP12_1460</name>
</gene>
<evidence type="ECO:0000255" key="1">
    <source>
        <dbReference type="HAMAP-Rule" id="MF_00337"/>
    </source>
</evidence>
<evidence type="ECO:0000256" key="2">
    <source>
        <dbReference type="SAM" id="MobiDB-lite"/>
    </source>
</evidence>
<organism>
    <name type="scientific">Helicobacter pylori (strain P12)</name>
    <dbReference type="NCBI Taxonomy" id="570508"/>
    <lineage>
        <taxon>Bacteria</taxon>
        <taxon>Pseudomonadati</taxon>
        <taxon>Campylobacterota</taxon>
        <taxon>Epsilonproteobacteria</taxon>
        <taxon>Campylobacterales</taxon>
        <taxon>Helicobacteraceae</taxon>
        <taxon>Helicobacter</taxon>
    </lineage>
</organism>
<comment type="function">
    <text evidence="1">Bidirectionally degrades single-stranded DNA into large acid-insoluble oligonucleotides, which are then degraded further into small acid-soluble oligonucleotides.</text>
</comment>
<comment type="catalytic activity">
    <reaction evidence="1">
        <text>Exonucleolytic cleavage in either 5'- to 3'- or 3'- to 5'-direction to yield nucleoside 5'-phosphates.</text>
        <dbReference type="EC" id="3.1.11.6"/>
    </reaction>
</comment>
<comment type="subunit">
    <text evidence="1">Heterooligomer composed of large and small subunits.</text>
</comment>
<comment type="subcellular location">
    <subcellularLocation>
        <location evidence="1">Cytoplasm</location>
    </subcellularLocation>
</comment>
<comment type="similarity">
    <text evidence="1">Belongs to the XseB family.</text>
</comment>
<dbReference type="EC" id="3.1.11.6" evidence="1"/>
<dbReference type="EMBL" id="CP001217">
    <property type="protein sequence ID" value="ACJ08608.1"/>
    <property type="molecule type" value="Genomic_DNA"/>
</dbReference>
<dbReference type="SMR" id="B6JNY0"/>
<dbReference type="KEGG" id="hpp:HPP12_1460"/>
<dbReference type="HOGENOM" id="CLU_145918_6_0_7"/>
<dbReference type="Proteomes" id="UP000008198">
    <property type="component" value="Chromosome"/>
</dbReference>
<dbReference type="GO" id="GO:0005737">
    <property type="term" value="C:cytoplasm"/>
    <property type="evidence" value="ECO:0007669"/>
    <property type="project" value="UniProtKB-SubCell"/>
</dbReference>
<dbReference type="GO" id="GO:0009318">
    <property type="term" value="C:exodeoxyribonuclease VII complex"/>
    <property type="evidence" value="ECO:0007669"/>
    <property type="project" value="InterPro"/>
</dbReference>
<dbReference type="GO" id="GO:0008855">
    <property type="term" value="F:exodeoxyribonuclease VII activity"/>
    <property type="evidence" value="ECO:0007669"/>
    <property type="project" value="UniProtKB-UniRule"/>
</dbReference>
<dbReference type="GO" id="GO:0006308">
    <property type="term" value="P:DNA catabolic process"/>
    <property type="evidence" value="ECO:0007669"/>
    <property type="project" value="UniProtKB-UniRule"/>
</dbReference>
<dbReference type="Gene3D" id="1.10.287.1040">
    <property type="entry name" value="Exonuclease VII, small subunit"/>
    <property type="match status" value="1"/>
</dbReference>
<dbReference type="HAMAP" id="MF_00337">
    <property type="entry name" value="Exonuc_7_S"/>
    <property type="match status" value="1"/>
</dbReference>
<dbReference type="InterPro" id="IPR003761">
    <property type="entry name" value="Exonuc_VII_S"/>
</dbReference>
<dbReference type="InterPro" id="IPR037004">
    <property type="entry name" value="Exonuc_VII_ssu_sf"/>
</dbReference>
<dbReference type="NCBIfam" id="NF010668">
    <property type="entry name" value="PRK14065.1"/>
    <property type="match status" value="1"/>
</dbReference>
<dbReference type="NCBIfam" id="TIGR01280">
    <property type="entry name" value="xseB"/>
    <property type="match status" value="1"/>
</dbReference>
<dbReference type="Pfam" id="PF02609">
    <property type="entry name" value="Exonuc_VII_S"/>
    <property type="match status" value="1"/>
</dbReference>
<dbReference type="SUPFAM" id="SSF116842">
    <property type="entry name" value="XseB-like"/>
    <property type="match status" value="1"/>
</dbReference>
<protein>
    <recommendedName>
        <fullName evidence="1">Exodeoxyribonuclease 7 small subunit</fullName>
        <ecNumber evidence="1">3.1.11.6</ecNumber>
    </recommendedName>
    <alternativeName>
        <fullName evidence="1">Exodeoxyribonuclease VII small subunit</fullName>
        <shortName evidence="1">Exonuclease VII small subunit</shortName>
    </alternativeName>
</protein>
<accession>B6JNY0</accession>
<name>EX7S_HELP2</name>
<proteinExistence type="inferred from homology"/>
<sequence length="83" mass="9626">MQDELFETEKAPPKNAKNAPKKSFEEHVHSLEQAIDRLNDPNLSLKDGMDLYKTAMQELFLAQKLLENAYLEYEKLQTTDKKA</sequence>